<feature type="chain" id="PRO_0000131691" description="RNA exonuclease 4">
    <location>
        <begin position="1"/>
        <end position="310"/>
    </location>
</feature>
<feature type="domain" description="Exonuclease">
    <location>
        <begin position="115"/>
        <end position="277"/>
    </location>
</feature>
<feature type="region of interest" description="Disordered" evidence="2">
    <location>
        <begin position="1"/>
        <end position="107"/>
    </location>
</feature>
<feature type="region of interest" description="Disordered" evidence="2">
    <location>
        <begin position="287"/>
        <end position="310"/>
    </location>
</feature>
<feature type="compositionally biased region" description="Polar residues" evidence="2">
    <location>
        <begin position="1"/>
        <end position="11"/>
    </location>
</feature>
<feature type="compositionally biased region" description="Basic and acidic residues" evidence="2">
    <location>
        <begin position="44"/>
        <end position="53"/>
    </location>
</feature>
<feature type="compositionally biased region" description="Basic and acidic residues" evidence="2">
    <location>
        <begin position="61"/>
        <end position="70"/>
    </location>
</feature>
<feature type="compositionally biased region" description="Polar residues" evidence="2">
    <location>
        <begin position="83"/>
        <end position="93"/>
    </location>
</feature>
<feature type="compositionally biased region" description="Basic and acidic residues" evidence="2">
    <location>
        <begin position="94"/>
        <end position="105"/>
    </location>
</feature>
<feature type="compositionally biased region" description="Basic and acidic residues" evidence="2">
    <location>
        <begin position="288"/>
        <end position="299"/>
    </location>
</feature>
<feature type="compositionally biased region" description="Basic residues" evidence="2">
    <location>
        <begin position="300"/>
        <end position="310"/>
    </location>
</feature>
<dbReference type="EC" id="3.1.-.-"/>
<dbReference type="EMBL" id="AAHF01000008">
    <property type="protein sequence ID" value="EAL87647.1"/>
    <property type="molecule type" value="Genomic_DNA"/>
</dbReference>
<dbReference type="RefSeq" id="XP_749685.1">
    <property type="nucleotide sequence ID" value="XM_744592.1"/>
</dbReference>
<dbReference type="SMR" id="Q4WHF8"/>
<dbReference type="FunCoup" id="Q4WHF8">
    <property type="interactions" value="782"/>
</dbReference>
<dbReference type="STRING" id="330879.Q4WHF8"/>
<dbReference type="EnsemblFungi" id="EAL87647">
    <property type="protein sequence ID" value="EAL87647"/>
    <property type="gene ID" value="AFUA_2G05560"/>
</dbReference>
<dbReference type="GeneID" id="3506712"/>
<dbReference type="KEGG" id="afm:AFUA_2G05560"/>
<dbReference type="VEuPathDB" id="FungiDB:Afu2g05560"/>
<dbReference type="eggNOG" id="KOG2249">
    <property type="taxonomic scope" value="Eukaryota"/>
</dbReference>
<dbReference type="HOGENOM" id="CLU_022453_2_1_1"/>
<dbReference type="InParanoid" id="Q4WHF8"/>
<dbReference type="OMA" id="SQKEMRF"/>
<dbReference type="OrthoDB" id="8191639at2759"/>
<dbReference type="Proteomes" id="UP000002530">
    <property type="component" value="Chromosome 2"/>
</dbReference>
<dbReference type="GO" id="GO:0005634">
    <property type="term" value="C:nucleus"/>
    <property type="evidence" value="ECO:0000318"/>
    <property type="project" value="GO_Central"/>
</dbReference>
<dbReference type="GO" id="GO:0008408">
    <property type="term" value="F:3'-5' exonuclease activity"/>
    <property type="evidence" value="ECO:0007669"/>
    <property type="project" value="InterPro"/>
</dbReference>
<dbReference type="GO" id="GO:0004527">
    <property type="term" value="F:exonuclease activity"/>
    <property type="evidence" value="ECO:0000318"/>
    <property type="project" value="GO_Central"/>
</dbReference>
<dbReference type="GO" id="GO:0003676">
    <property type="term" value="F:nucleic acid binding"/>
    <property type="evidence" value="ECO:0007669"/>
    <property type="project" value="InterPro"/>
</dbReference>
<dbReference type="GO" id="GO:0006396">
    <property type="term" value="P:RNA processing"/>
    <property type="evidence" value="ECO:0000318"/>
    <property type="project" value="GO_Central"/>
</dbReference>
<dbReference type="GO" id="GO:0006364">
    <property type="term" value="P:rRNA processing"/>
    <property type="evidence" value="ECO:0007669"/>
    <property type="project" value="UniProtKB-KW"/>
</dbReference>
<dbReference type="CDD" id="cd06144">
    <property type="entry name" value="REX4_like"/>
    <property type="match status" value="1"/>
</dbReference>
<dbReference type="FunFam" id="3.30.420.10:FF:000007">
    <property type="entry name" value="Interferon-stimulated exonuclease gene 20"/>
    <property type="match status" value="1"/>
</dbReference>
<dbReference type="Gene3D" id="3.30.420.10">
    <property type="entry name" value="Ribonuclease H-like superfamily/Ribonuclease H"/>
    <property type="match status" value="1"/>
</dbReference>
<dbReference type="InterPro" id="IPR013520">
    <property type="entry name" value="Exonuclease_RNaseT/DNA_pol3"/>
</dbReference>
<dbReference type="InterPro" id="IPR037431">
    <property type="entry name" value="REX4_DEDDh_dom"/>
</dbReference>
<dbReference type="InterPro" id="IPR047021">
    <property type="entry name" value="REXO1/3/4-like"/>
</dbReference>
<dbReference type="InterPro" id="IPR012337">
    <property type="entry name" value="RNaseH-like_sf"/>
</dbReference>
<dbReference type="InterPro" id="IPR036397">
    <property type="entry name" value="RNaseH_sf"/>
</dbReference>
<dbReference type="PANTHER" id="PTHR12801:SF45">
    <property type="entry name" value="RNA EXONUCLEASE 4"/>
    <property type="match status" value="1"/>
</dbReference>
<dbReference type="PANTHER" id="PTHR12801">
    <property type="entry name" value="RNA EXONUCLEASE REXO1 / RECO3 FAMILY MEMBER-RELATED"/>
    <property type="match status" value="1"/>
</dbReference>
<dbReference type="Pfam" id="PF00929">
    <property type="entry name" value="RNase_T"/>
    <property type="match status" value="1"/>
</dbReference>
<dbReference type="SMART" id="SM00479">
    <property type="entry name" value="EXOIII"/>
    <property type="match status" value="1"/>
</dbReference>
<dbReference type="SUPFAM" id="SSF53098">
    <property type="entry name" value="Ribonuclease H-like"/>
    <property type="match status" value="1"/>
</dbReference>
<sequence length="310" mass="34922">MDVNNLSSNWKKLQETLKKQSASSSSKKRKTSDRETQNVTTKKQKIETIERKKSSLKKKRMSEGQEHGGDESAQEPMVKTISHKSSTATISEQSRTESKPTKVNEGRSPTAEIGKYVAMDCEMVGVGPNPDNDSALARVSIVNFNGEQVYDSYVRPKEMITDWRTHVSGISPKHMAEARSLEQVQKDVAEILDGRILVGHAVSNDLDALLLGHPKRDIRDTSKHPPYRKIAGGGSPRLKILASEFLGLNIQDGAHSSVEDAKATMLLYRRDKEAFEREHLKKWPIRVVVDKKENGEDQKKKKKKKKPRKR</sequence>
<accession>Q4WHF8</accession>
<protein>
    <recommendedName>
        <fullName>RNA exonuclease 4</fullName>
        <ecNumber>3.1.-.-</ecNumber>
    </recommendedName>
</protein>
<proteinExistence type="inferred from homology"/>
<name>REXO4_ASPFU</name>
<evidence type="ECO:0000250" key="1"/>
<evidence type="ECO:0000256" key="2">
    <source>
        <dbReference type="SAM" id="MobiDB-lite"/>
    </source>
</evidence>
<evidence type="ECO:0000305" key="3"/>
<reference key="1">
    <citation type="journal article" date="2005" name="Nature">
        <title>Genomic sequence of the pathogenic and allergenic filamentous fungus Aspergillus fumigatus.</title>
        <authorList>
            <person name="Nierman W.C."/>
            <person name="Pain A."/>
            <person name="Anderson M.J."/>
            <person name="Wortman J.R."/>
            <person name="Kim H.S."/>
            <person name="Arroyo J."/>
            <person name="Berriman M."/>
            <person name="Abe K."/>
            <person name="Archer D.B."/>
            <person name="Bermejo C."/>
            <person name="Bennett J.W."/>
            <person name="Bowyer P."/>
            <person name="Chen D."/>
            <person name="Collins M."/>
            <person name="Coulsen R."/>
            <person name="Davies R."/>
            <person name="Dyer P.S."/>
            <person name="Farman M.L."/>
            <person name="Fedorova N."/>
            <person name="Fedorova N.D."/>
            <person name="Feldblyum T.V."/>
            <person name="Fischer R."/>
            <person name="Fosker N."/>
            <person name="Fraser A."/>
            <person name="Garcia J.L."/>
            <person name="Garcia M.J."/>
            <person name="Goble A."/>
            <person name="Goldman G.H."/>
            <person name="Gomi K."/>
            <person name="Griffith-Jones S."/>
            <person name="Gwilliam R."/>
            <person name="Haas B.J."/>
            <person name="Haas H."/>
            <person name="Harris D.E."/>
            <person name="Horiuchi H."/>
            <person name="Huang J."/>
            <person name="Humphray S."/>
            <person name="Jimenez J."/>
            <person name="Keller N."/>
            <person name="Khouri H."/>
            <person name="Kitamoto K."/>
            <person name="Kobayashi T."/>
            <person name="Konzack S."/>
            <person name="Kulkarni R."/>
            <person name="Kumagai T."/>
            <person name="Lafton A."/>
            <person name="Latge J.-P."/>
            <person name="Li W."/>
            <person name="Lord A."/>
            <person name="Lu C."/>
            <person name="Majoros W.H."/>
            <person name="May G.S."/>
            <person name="Miller B.L."/>
            <person name="Mohamoud Y."/>
            <person name="Molina M."/>
            <person name="Monod M."/>
            <person name="Mouyna I."/>
            <person name="Mulligan S."/>
            <person name="Murphy L.D."/>
            <person name="O'Neil S."/>
            <person name="Paulsen I."/>
            <person name="Penalva M.A."/>
            <person name="Pertea M."/>
            <person name="Price C."/>
            <person name="Pritchard B.L."/>
            <person name="Quail M.A."/>
            <person name="Rabbinowitsch E."/>
            <person name="Rawlins N."/>
            <person name="Rajandream M.A."/>
            <person name="Reichard U."/>
            <person name="Renauld H."/>
            <person name="Robson G.D."/>
            <person name="Rodriguez de Cordoba S."/>
            <person name="Rodriguez-Pena J.M."/>
            <person name="Ronning C.M."/>
            <person name="Rutter S."/>
            <person name="Salzberg S.L."/>
            <person name="Sanchez M."/>
            <person name="Sanchez-Ferrero J.C."/>
            <person name="Saunders D."/>
            <person name="Seeger K."/>
            <person name="Squares R."/>
            <person name="Squares S."/>
            <person name="Takeuchi M."/>
            <person name="Tekaia F."/>
            <person name="Turner G."/>
            <person name="Vazquez de Aldana C.R."/>
            <person name="Weidman J."/>
            <person name="White O."/>
            <person name="Woodward J.R."/>
            <person name="Yu J.-H."/>
            <person name="Fraser C.M."/>
            <person name="Galagan J.E."/>
            <person name="Asai K."/>
            <person name="Machida M."/>
            <person name="Hall N."/>
            <person name="Barrell B.G."/>
            <person name="Denning D.W."/>
        </authorList>
    </citation>
    <scope>NUCLEOTIDE SEQUENCE [LARGE SCALE GENOMIC DNA]</scope>
    <source>
        <strain>ATCC MYA-4609 / CBS 101355 / FGSC A1100 / Af293</strain>
    </source>
</reference>
<organism>
    <name type="scientific">Aspergillus fumigatus (strain ATCC MYA-4609 / CBS 101355 / FGSC A1100 / Af293)</name>
    <name type="common">Neosartorya fumigata</name>
    <dbReference type="NCBI Taxonomy" id="330879"/>
    <lineage>
        <taxon>Eukaryota</taxon>
        <taxon>Fungi</taxon>
        <taxon>Dikarya</taxon>
        <taxon>Ascomycota</taxon>
        <taxon>Pezizomycotina</taxon>
        <taxon>Eurotiomycetes</taxon>
        <taxon>Eurotiomycetidae</taxon>
        <taxon>Eurotiales</taxon>
        <taxon>Aspergillaceae</taxon>
        <taxon>Aspergillus</taxon>
        <taxon>Aspergillus subgen. Fumigati</taxon>
    </lineage>
</organism>
<keyword id="KW-0269">Exonuclease</keyword>
<keyword id="KW-0378">Hydrolase</keyword>
<keyword id="KW-0540">Nuclease</keyword>
<keyword id="KW-0539">Nucleus</keyword>
<keyword id="KW-1185">Reference proteome</keyword>
<keyword id="KW-0698">rRNA processing</keyword>
<comment type="function">
    <text evidence="1">Exoribonuclease involved in ribosome biosynthesis. Involved in the processing of ITS1, the internal transcribed spacer localized between the 18S and 5.8S rRNAs (By similarity).</text>
</comment>
<comment type="subcellular location">
    <subcellularLocation>
        <location evidence="1">Nucleus</location>
    </subcellularLocation>
</comment>
<comment type="similarity">
    <text evidence="3">Belongs to the REXO4 family.</text>
</comment>
<gene>
    <name type="primary">rex4</name>
    <name type="ORF">AFUA_2G05560</name>
</gene>